<proteinExistence type="inferred from homology"/>
<sequence length="184" mass="20586">MYLMKDITRDGAKVLRETAKPVTFPLSDEDKQLAHDMMAYLVISQDEEQNEKYHLRPGVGLAAPQVGQSKAMAAVLVPGDDNEILFKEVLINPRIISNSVQHAALAEGEGCLSVDKDVPGYVVRADRITISYQNEAGEHKKIRLKNYPAIVCQHEIDHLNGVLFYDHINKEHPFTIDPDAVIIK</sequence>
<gene>
    <name evidence="1" type="primary">def</name>
    <name type="ordered locus">LCABL_15330</name>
</gene>
<dbReference type="EC" id="3.5.1.88" evidence="1"/>
<dbReference type="EMBL" id="FM177140">
    <property type="protein sequence ID" value="CAQ66614.1"/>
    <property type="molecule type" value="Genomic_DNA"/>
</dbReference>
<dbReference type="SMR" id="B3WE13"/>
<dbReference type="KEGG" id="lcb:LCABL_15330"/>
<dbReference type="HOGENOM" id="CLU_061901_4_0_9"/>
<dbReference type="GO" id="GO:0046872">
    <property type="term" value="F:metal ion binding"/>
    <property type="evidence" value="ECO:0007669"/>
    <property type="project" value="UniProtKB-KW"/>
</dbReference>
<dbReference type="GO" id="GO:0042586">
    <property type="term" value="F:peptide deformylase activity"/>
    <property type="evidence" value="ECO:0007669"/>
    <property type="project" value="UniProtKB-UniRule"/>
</dbReference>
<dbReference type="GO" id="GO:0043686">
    <property type="term" value="P:co-translational protein modification"/>
    <property type="evidence" value="ECO:0007669"/>
    <property type="project" value="TreeGrafter"/>
</dbReference>
<dbReference type="GO" id="GO:0006412">
    <property type="term" value="P:translation"/>
    <property type="evidence" value="ECO:0007669"/>
    <property type="project" value="UniProtKB-UniRule"/>
</dbReference>
<dbReference type="CDD" id="cd00487">
    <property type="entry name" value="Pep_deformylase"/>
    <property type="match status" value="1"/>
</dbReference>
<dbReference type="FunFam" id="3.90.45.10:FF:000002">
    <property type="entry name" value="Peptide deformylase"/>
    <property type="match status" value="1"/>
</dbReference>
<dbReference type="Gene3D" id="3.90.45.10">
    <property type="entry name" value="Peptide deformylase"/>
    <property type="match status" value="1"/>
</dbReference>
<dbReference type="HAMAP" id="MF_00163">
    <property type="entry name" value="Pep_deformylase"/>
    <property type="match status" value="1"/>
</dbReference>
<dbReference type="InterPro" id="IPR023635">
    <property type="entry name" value="Peptide_deformylase"/>
</dbReference>
<dbReference type="InterPro" id="IPR036821">
    <property type="entry name" value="Peptide_deformylase_sf"/>
</dbReference>
<dbReference type="NCBIfam" id="TIGR00079">
    <property type="entry name" value="pept_deformyl"/>
    <property type="match status" value="1"/>
</dbReference>
<dbReference type="PANTHER" id="PTHR10458">
    <property type="entry name" value="PEPTIDE DEFORMYLASE"/>
    <property type="match status" value="1"/>
</dbReference>
<dbReference type="PANTHER" id="PTHR10458:SF8">
    <property type="entry name" value="PEPTIDE DEFORMYLASE 2"/>
    <property type="match status" value="1"/>
</dbReference>
<dbReference type="Pfam" id="PF01327">
    <property type="entry name" value="Pep_deformylase"/>
    <property type="match status" value="1"/>
</dbReference>
<dbReference type="PIRSF" id="PIRSF004749">
    <property type="entry name" value="Pep_def"/>
    <property type="match status" value="1"/>
</dbReference>
<dbReference type="PRINTS" id="PR01576">
    <property type="entry name" value="PDEFORMYLASE"/>
</dbReference>
<dbReference type="SUPFAM" id="SSF56420">
    <property type="entry name" value="Peptide deformylase"/>
    <property type="match status" value="1"/>
</dbReference>
<organism>
    <name type="scientific">Lacticaseibacillus casei (strain BL23)</name>
    <name type="common">Lactobacillus casei</name>
    <dbReference type="NCBI Taxonomy" id="543734"/>
    <lineage>
        <taxon>Bacteria</taxon>
        <taxon>Bacillati</taxon>
        <taxon>Bacillota</taxon>
        <taxon>Bacilli</taxon>
        <taxon>Lactobacillales</taxon>
        <taxon>Lactobacillaceae</taxon>
        <taxon>Lacticaseibacillus</taxon>
    </lineage>
</organism>
<keyword id="KW-0378">Hydrolase</keyword>
<keyword id="KW-0408">Iron</keyword>
<keyword id="KW-0479">Metal-binding</keyword>
<keyword id="KW-0648">Protein biosynthesis</keyword>
<reference key="1">
    <citation type="submission" date="2008-06" db="EMBL/GenBank/DDBJ databases">
        <title>Lactobacillus casei BL23 complete genome sequence.</title>
        <authorList>
            <person name="Maze A."/>
            <person name="Boel G."/>
            <person name="Bourand A."/>
            <person name="Loux V."/>
            <person name="Gibrat J.F."/>
            <person name="Zuniga M."/>
            <person name="Hartke A."/>
            <person name="Deutscher J."/>
        </authorList>
    </citation>
    <scope>NUCLEOTIDE SEQUENCE [LARGE SCALE GENOMIC DNA]</scope>
    <source>
        <strain>BL23</strain>
    </source>
</reference>
<protein>
    <recommendedName>
        <fullName evidence="1">Peptide deformylase</fullName>
        <shortName evidence="1">PDF</shortName>
        <ecNumber evidence="1">3.5.1.88</ecNumber>
    </recommendedName>
    <alternativeName>
        <fullName evidence="1">Polypeptide deformylase</fullName>
    </alternativeName>
</protein>
<name>DEF_LACCB</name>
<accession>B3WE13</accession>
<feature type="chain" id="PRO_1000097318" description="Peptide deformylase">
    <location>
        <begin position="1"/>
        <end position="184"/>
    </location>
</feature>
<feature type="active site" evidence="1">
    <location>
        <position position="155"/>
    </location>
</feature>
<feature type="binding site" evidence="1">
    <location>
        <position position="111"/>
    </location>
    <ligand>
        <name>Fe cation</name>
        <dbReference type="ChEBI" id="CHEBI:24875"/>
    </ligand>
</feature>
<feature type="binding site" evidence="1">
    <location>
        <position position="154"/>
    </location>
    <ligand>
        <name>Fe cation</name>
        <dbReference type="ChEBI" id="CHEBI:24875"/>
    </ligand>
</feature>
<feature type="binding site" evidence="1">
    <location>
        <position position="158"/>
    </location>
    <ligand>
        <name>Fe cation</name>
        <dbReference type="ChEBI" id="CHEBI:24875"/>
    </ligand>
</feature>
<comment type="function">
    <text evidence="1">Removes the formyl group from the N-terminal Met of newly synthesized proteins. Requires at least a dipeptide for an efficient rate of reaction. N-terminal L-methionine is a prerequisite for activity but the enzyme has broad specificity at other positions.</text>
</comment>
<comment type="catalytic activity">
    <reaction evidence="1">
        <text>N-terminal N-formyl-L-methionyl-[peptide] + H2O = N-terminal L-methionyl-[peptide] + formate</text>
        <dbReference type="Rhea" id="RHEA:24420"/>
        <dbReference type="Rhea" id="RHEA-COMP:10639"/>
        <dbReference type="Rhea" id="RHEA-COMP:10640"/>
        <dbReference type="ChEBI" id="CHEBI:15377"/>
        <dbReference type="ChEBI" id="CHEBI:15740"/>
        <dbReference type="ChEBI" id="CHEBI:49298"/>
        <dbReference type="ChEBI" id="CHEBI:64731"/>
        <dbReference type="EC" id="3.5.1.88"/>
    </reaction>
</comment>
<comment type="cofactor">
    <cofactor evidence="1">
        <name>Fe(2+)</name>
        <dbReference type="ChEBI" id="CHEBI:29033"/>
    </cofactor>
    <text evidence="1">Binds 1 Fe(2+) ion.</text>
</comment>
<comment type="similarity">
    <text evidence="1">Belongs to the polypeptide deformylase family.</text>
</comment>
<evidence type="ECO:0000255" key="1">
    <source>
        <dbReference type="HAMAP-Rule" id="MF_00163"/>
    </source>
</evidence>